<accession>A1ACN7</accession>
<protein>
    <recommendedName>
        <fullName evidence="1">Imidazole glycerol phosphate synthase subunit HisF</fullName>
        <ecNumber evidence="1">4.3.2.10</ecNumber>
    </recommendedName>
    <alternativeName>
        <fullName evidence="1">IGP synthase cyclase subunit</fullName>
    </alternativeName>
    <alternativeName>
        <fullName evidence="1">IGP synthase subunit HisF</fullName>
    </alternativeName>
    <alternativeName>
        <fullName evidence="1">ImGP synthase subunit HisF</fullName>
        <shortName evidence="1">IGPS subunit HisF</shortName>
    </alternativeName>
</protein>
<evidence type="ECO:0000255" key="1">
    <source>
        <dbReference type="HAMAP-Rule" id="MF_01013"/>
    </source>
</evidence>
<keyword id="KW-0028">Amino-acid biosynthesis</keyword>
<keyword id="KW-0963">Cytoplasm</keyword>
<keyword id="KW-0368">Histidine biosynthesis</keyword>
<keyword id="KW-0456">Lyase</keyword>
<keyword id="KW-1185">Reference proteome</keyword>
<sequence>MLAKRIIPCLDVRDGQVVKGVQFRNHEIIGDIVPLAKRYAEEGADELVFYDITASSDGRVVDKSWVSRVAEVIDIPFCVAGGIKSLEDAAKILSFGADKISINSPALADPTLITRLADRFGVQCIVVGIDTWYDAETGKYHVNQYTGDESRTRVTQWETLDWVEEVQKRGAGEIVLNMMNQDGVRNGYDLEQLKKVREVCHVPLIASGGAGTMEHFLEAFRDADVDGALAASVFHKQIINIGELKAYLATQGVEIRIC</sequence>
<dbReference type="EC" id="4.3.2.10" evidence="1"/>
<dbReference type="EMBL" id="CP000468">
    <property type="protein sequence ID" value="ABJ01427.1"/>
    <property type="molecule type" value="Genomic_DNA"/>
</dbReference>
<dbReference type="RefSeq" id="WP_000880175.1">
    <property type="nucleotide sequence ID" value="NZ_CADILS010000063.1"/>
</dbReference>
<dbReference type="SMR" id="A1ACN7"/>
<dbReference type="KEGG" id="ecv:APECO1_1122"/>
<dbReference type="HOGENOM" id="CLU_048577_4_0_6"/>
<dbReference type="UniPathway" id="UPA00031">
    <property type="reaction ID" value="UER00010"/>
</dbReference>
<dbReference type="Proteomes" id="UP000008216">
    <property type="component" value="Chromosome"/>
</dbReference>
<dbReference type="GO" id="GO:0005737">
    <property type="term" value="C:cytoplasm"/>
    <property type="evidence" value="ECO:0007669"/>
    <property type="project" value="UniProtKB-SubCell"/>
</dbReference>
<dbReference type="GO" id="GO:0000107">
    <property type="term" value="F:imidazoleglycerol-phosphate synthase activity"/>
    <property type="evidence" value="ECO:0007669"/>
    <property type="project" value="UniProtKB-UniRule"/>
</dbReference>
<dbReference type="GO" id="GO:0016829">
    <property type="term" value="F:lyase activity"/>
    <property type="evidence" value="ECO:0007669"/>
    <property type="project" value="UniProtKB-KW"/>
</dbReference>
<dbReference type="GO" id="GO:0000105">
    <property type="term" value="P:L-histidine biosynthetic process"/>
    <property type="evidence" value="ECO:0007669"/>
    <property type="project" value="UniProtKB-UniRule"/>
</dbReference>
<dbReference type="CDD" id="cd04731">
    <property type="entry name" value="HisF"/>
    <property type="match status" value="1"/>
</dbReference>
<dbReference type="FunFam" id="3.20.20.70:FF:000006">
    <property type="entry name" value="Imidazole glycerol phosphate synthase subunit HisF"/>
    <property type="match status" value="1"/>
</dbReference>
<dbReference type="Gene3D" id="3.20.20.70">
    <property type="entry name" value="Aldolase class I"/>
    <property type="match status" value="1"/>
</dbReference>
<dbReference type="HAMAP" id="MF_01013">
    <property type="entry name" value="HisF"/>
    <property type="match status" value="1"/>
</dbReference>
<dbReference type="InterPro" id="IPR013785">
    <property type="entry name" value="Aldolase_TIM"/>
</dbReference>
<dbReference type="InterPro" id="IPR006062">
    <property type="entry name" value="His_biosynth"/>
</dbReference>
<dbReference type="InterPro" id="IPR004651">
    <property type="entry name" value="HisF"/>
</dbReference>
<dbReference type="InterPro" id="IPR050064">
    <property type="entry name" value="IGPS_HisA/HisF"/>
</dbReference>
<dbReference type="InterPro" id="IPR011060">
    <property type="entry name" value="RibuloseP-bd_barrel"/>
</dbReference>
<dbReference type="NCBIfam" id="TIGR00735">
    <property type="entry name" value="hisF"/>
    <property type="match status" value="1"/>
</dbReference>
<dbReference type="PANTHER" id="PTHR21235:SF2">
    <property type="entry name" value="IMIDAZOLE GLYCEROL PHOSPHATE SYNTHASE HISHF"/>
    <property type="match status" value="1"/>
</dbReference>
<dbReference type="PANTHER" id="PTHR21235">
    <property type="entry name" value="IMIDAZOLE GLYCEROL PHOSPHATE SYNTHASE SUBUNIT HISF/H IGP SYNTHASE SUBUNIT HISF/H"/>
    <property type="match status" value="1"/>
</dbReference>
<dbReference type="Pfam" id="PF00977">
    <property type="entry name" value="His_biosynth"/>
    <property type="match status" value="1"/>
</dbReference>
<dbReference type="SUPFAM" id="SSF51366">
    <property type="entry name" value="Ribulose-phoshate binding barrel"/>
    <property type="match status" value="1"/>
</dbReference>
<feature type="chain" id="PRO_1000063057" description="Imidazole glycerol phosphate synthase subunit HisF">
    <location>
        <begin position="1"/>
        <end position="258"/>
    </location>
</feature>
<feature type="active site" evidence="1">
    <location>
        <position position="11"/>
    </location>
</feature>
<feature type="active site" evidence="1">
    <location>
        <position position="130"/>
    </location>
</feature>
<name>HIS6_ECOK1</name>
<reference key="1">
    <citation type="journal article" date="2007" name="J. Bacteriol.">
        <title>The genome sequence of avian pathogenic Escherichia coli strain O1:K1:H7 shares strong similarities with human extraintestinal pathogenic E. coli genomes.</title>
        <authorList>
            <person name="Johnson T.J."/>
            <person name="Kariyawasam S."/>
            <person name="Wannemuehler Y."/>
            <person name="Mangiamele P."/>
            <person name="Johnson S.J."/>
            <person name="Doetkott C."/>
            <person name="Skyberg J.A."/>
            <person name="Lynne A.M."/>
            <person name="Johnson J.R."/>
            <person name="Nolan L.K."/>
        </authorList>
    </citation>
    <scope>NUCLEOTIDE SEQUENCE [LARGE SCALE GENOMIC DNA]</scope>
</reference>
<gene>
    <name evidence="1" type="primary">hisF</name>
    <name type="ordered locus">Ecok1_19330</name>
    <name type="ORF">APECO1_1122</name>
</gene>
<organism>
    <name type="scientific">Escherichia coli O1:K1 / APEC</name>
    <dbReference type="NCBI Taxonomy" id="405955"/>
    <lineage>
        <taxon>Bacteria</taxon>
        <taxon>Pseudomonadati</taxon>
        <taxon>Pseudomonadota</taxon>
        <taxon>Gammaproteobacteria</taxon>
        <taxon>Enterobacterales</taxon>
        <taxon>Enterobacteriaceae</taxon>
        <taxon>Escherichia</taxon>
    </lineage>
</organism>
<proteinExistence type="inferred from homology"/>
<comment type="function">
    <text evidence="1">IGPS catalyzes the conversion of PRFAR and glutamine to IGP, AICAR and glutamate. The HisF subunit catalyzes the cyclization activity that produces IGP and AICAR from PRFAR using the ammonia provided by the HisH subunit.</text>
</comment>
<comment type="catalytic activity">
    <reaction evidence="1">
        <text>5-[(5-phospho-1-deoxy-D-ribulos-1-ylimino)methylamino]-1-(5-phospho-beta-D-ribosyl)imidazole-4-carboxamide + L-glutamine = D-erythro-1-(imidazol-4-yl)glycerol 3-phosphate + 5-amino-1-(5-phospho-beta-D-ribosyl)imidazole-4-carboxamide + L-glutamate + H(+)</text>
        <dbReference type="Rhea" id="RHEA:24793"/>
        <dbReference type="ChEBI" id="CHEBI:15378"/>
        <dbReference type="ChEBI" id="CHEBI:29985"/>
        <dbReference type="ChEBI" id="CHEBI:58278"/>
        <dbReference type="ChEBI" id="CHEBI:58359"/>
        <dbReference type="ChEBI" id="CHEBI:58475"/>
        <dbReference type="ChEBI" id="CHEBI:58525"/>
        <dbReference type="EC" id="4.3.2.10"/>
    </reaction>
</comment>
<comment type="pathway">
    <text evidence="1">Amino-acid biosynthesis; L-histidine biosynthesis; L-histidine from 5-phospho-alpha-D-ribose 1-diphosphate: step 5/9.</text>
</comment>
<comment type="subunit">
    <text evidence="1">Heterodimer of HisH and HisF.</text>
</comment>
<comment type="subcellular location">
    <subcellularLocation>
        <location evidence="1">Cytoplasm</location>
    </subcellularLocation>
</comment>
<comment type="similarity">
    <text evidence="1">Belongs to the HisA/HisF family.</text>
</comment>